<keyword id="KW-0238">DNA-binding</keyword>
<keyword id="KW-0479">Metal-binding</keyword>
<keyword id="KW-0507">mRNA processing</keyword>
<keyword id="KW-0508">mRNA splicing</keyword>
<keyword id="KW-0539">Nucleus</keyword>
<keyword id="KW-1185">Reference proteome</keyword>
<keyword id="KW-0747">Spliceosome</keyword>
<keyword id="KW-0862">Zinc</keyword>
<keyword id="KW-0863">Zinc-finger</keyword>
<dbReference type="EMBL" id="CR380947">
    <property type="protein sequence ID" value="CAG57702.1"/>
    <property type="molecule type" value="Genomic_DNA"/>
</dbReference>
<dbReference type="RefSeq" id="XP_444811.1">
    <property type="nucleotide sequence ID" value="XM_444811.1"/>
</dbReference>
<dbReference type="SMR" id="Q6FXX1"/>
<dbReference type="FunCoup" id="Q6FXX1">
    <property type="interactions" value="339"/>
</dbReference>
<dbReference type="STRING" id="284593.Q6FXX1"/>
<dbReference type="EnsemblFungi" id="CAGL0A00935g-T">
    <property type="protein sequence ID" value="CAGL0A00935g-T-p1"/>
    <property type="gene ID" value="CAGL0A00935g"/>
</dbReference>
<dbReference type="KEGG" id="cgr:2886435"/>
<dbReference type="CGD" id="CAL0126671">
    <property type="gene designation" value="CAGL0A00935g"/>
</dbReference>
<dbReference type="VEuPathDB" id="FungiDB:CAGL0A00935g"/>
<dbReference type="eggNOG" id="KOG1813">
    <property type="taxonomic scope" value="Eukaryota"/>
</dbReference>
<dbReference type="HOGENOM" id="CLU_050460_3_0_1"/>
<dbReference type="InParanoid" id="Q6FXX1"/>
<dbReference type="Proteomes" id="UP000002428">
    <property type="component" value="Chromosome A"/>
</dbReference>
<dbReference type="GO" id="GO:0000974">
    <property type="term" value="C:Prp19 complex"/>
    <property type="evidence" value="ECO:0007669"/>
    <property type="project" value="EnsemblFungi"/>
</dbReference>
<dbReference type="GO" id="GO:0005684">
    <property type="term" value="C:U2-type spliceosomal complex"/>
    <property type="evidence" value="ECO:0007669"/>
    <property type="project" value="EnsemblFungi"/>
</dbReference>
<dbReference type="GO" id="GO:0003677">
    <property type="term" value="F:DNA binding"/>
    <property type="evidence" value="ECO:0007669"/>
    <property type="project" value="UniProtKB-KW"/>
</dbReference>
<dbReference type="GO" id="GO:0008270">
    <property type="term" value="F:zinc ion binding"/>
    <property type="evidence" value="ECO:0007669"/>
    <property type="project" value="UniProtKB-KW"/>
</dbReference>
<dbReference type="GO" id="GO:0000349">
    <property type="term" value="P:generation of catalytic spliceosome for first transesterification step"/>
    <property type="evidence" value="ECO:0007669"/>
    <property type="project" value="EnsemblFungi"/>
</dbReference>
<dbReference type="GO" id="GO:0034247">
    <property type="term" value="P:snoRNA splicing"/>
    <property type="evidence" value="ECO:0007669"/>
    <property type="project" value="EnsemblFungi"/>
</dbReference>
<dbReference type="CDD" id="cd16539">
    <property type="entry name" value="RING-HC_RNF113A_B"/>
    <property type="match status" value="1"/>
</dbReference>
<dbReference type="FunFam" id="4.10.1000.10:FF:000041">
    <property type="entry name" value="Pre-mRNA-splicing factor CWC24"/>
    <property type="match status" value="1"/>
</dbReference>
<dbReference type="Gene3D" id="4.10.1000.10">
    <property type="entry name" value="Zinc finger, CCCH-type"/>
    <property type="match status" value="1"/>
</dbReference>
<dbReference type="Gene3D" id="3.30.40.10">
    <property type="entry name" value="Zinc/RING finger domain, C3HC4 (zinc finger)"/>
    <property type="match status" value="1"/>
</dbReference>
<dbReference type="InterPro" id="IPR039971">
    <property type="entry name" value="CWC24-like"/>
</dbReference>
<dbReference type="InterPro" id="IPR000571">
    <property type="entry name" value="Znf_CCCH"/>
</dbReference>
<dbReference type="InterPro" id="IPR036855">
    <property type="entry name" value="Znf_CCCH_sf"/>
</dbReference>
<dbReference type="InterPro" id="IPR001841">
    <property type="entry name" value="Znf_RING"/>
</dbReference>
<dbReference type="InterPro" id="IPR013083">
    <property type="entry name" value="Znf_RING/FYVE/PHD"/>
</dbReference>
<dbReference type="PANTHER" id="PTHR12930:SF0">
    <property type="entry name" value="RING FINGER PROTEIN 113B"/>
    <property type="match status" value="1"/>
</dbReference>
<dbReference type="PANTHER" id="PTHR12930">
    <property type="entry name" value="ZINC FINGER PROTEIN 183"/>
    <property type="match status" value="1"/>
</dbReference>
<dbReference type="Pfam" id="PF13923">
    <property type="entry name" value="zf-C3HC4_2"/>
    <property type="match status" value="1"/>
</dbReference>
<dbReference type="Pfam" id="PF00642">
    <property type="entry name" value="zf-CCCH"/>
    <property type="match status" value="1"/>
</dbReference>
<dbReference type="SMART" id="SM00184">
    <property type="entry name" value="RING"/>
    <property type="match status" value="1"/>
</dbReference>
<dbReference type="SMART" id="SM00356">
    <property type="entry name" value="ZnF_C3H1"/>
    <property type="match status" value="1"/>
</dbReference>
<dbReference type="SUPFAM" id="SSF90229">
    <property type="entry name" value="CCCH zinc finger"/>
    <property type="match status" value="1"/>
</dbReference>
<dbReference type="SUPFAM" id="SSF57850">
    <property type="entry name" value="RING/U-box"/>
    <property type="match status" value="1"/>
</dbReference>
<dbReference type="PROSITE" id="PS50103">
    <property type="entry name" value="ZF_C3H1"/>
    <property type="match status" value="1"/>
</dbReference>
<dbReference type="PROSITE" id="PS50089">
    <property type="entry name" value="ZF_RING_2"/>
    <property type="match status" value="1"/>
</dbReference>
<evidence type="ECO:0000250" key="1"/>
<evidence type="ECO:0000255" key="2">
    <source>
        <dbReference type="PROSITE-ProRule" id="PRU00175"/>
    </source>
</evidence>
<evidence type="ECO:0000255" key="3">
    <source>
        <dbReference type="PROSITE-ProRule" id="PRU00723"/>
    </source>
</evidence>
<evidence type="ECO:0000256" key="4">
    <source>
        <dbReference type="SAM" id="MobiDB-lite"/>
    </source>
</evidence>
<evidence type="ECO:0000305" key="5"/>
<feature type="chain" id="PRO_0000055886" description="Pre-mRNA-splicing factor CWC24">
    <location>
        <begin position="1"/>
        <end position="226"/>
    </location>
</feature>
<feature type="zinc finger region" description="C3H1-type" evidence="3">
    <location>
        <begin position="107"/>
        <end position="135"/>
    </location>
</feature>
<feature type="zinc finger region" description="RING-type" evidence="2">
    <location>
        <begin position="165"/>
        <end position="203"/>
    </location>
</feature>
<feature type="region of interest" description="Disordered" evidence="4">
    <location>
        <begin position="1"/>
        <end position="26"/>
    </location>
</feature>
<feature type="compositionally biased region" description="Basic residues" evidence="4">
    <location>
        <begin position="1"/>
        <end position="15"/>
    </location>
</feature>
<accession>Q6FXX1</accession>
<protein>
    <recommendedName>
        <fullName>Pre-mRNA-splicing factor CWC24</fullName>
    </recommendedName>
</protein>
<organism>
    <name type="scientific">Candida glabrata (strain ATCC 2001 / BCRC 20586 / JCM 3761 / NBRC 0622 / NRRL Y-65 / CBS 138)</name>
    <name type="common">Yeast</name>
    <name type="synonym">Nakaseomyces glabratus</name>
    <dbReference type="NCBI Taxonomy" id="284593"/>
    <lineage>
        <taxon>Eukaryota</taxon>
        <taxon>Fungi</taxon>
        <taxon>Dikarya</taxon>
        <taxon>Ascomycota</taxon>
        <taxon>Saccharomycotina</taxon>
        <taxon>Saccharomycetes</taxon>
        <taxon>Saccharomycetales</taxon>
        <taxon>Saccharomycetaceae</taxon>
        <taxon>Nakaseomyces</taxon>
    </lineage>
</organism>
<comment type="function">
    <text evidence="1">Involved in pre-mRNA splicing.</text>
</comment>
<comment type="subunit">
    <text evidence="1">Associated with the spliceosome.</text>
</comment>
<comment type="subcellular location">
    <subcellularLocation>
        <location evidence="1">Nucleus</location>
    </subcellularLocation>
</comment>
<comment type="similarity">
    <text evidence="5">Belongs to the CWC24 family.</text>
</comment>
<reference key="1">
    <citation type="journal article" date="2004" name="Nature">
        <title>Genome evolution in yeasts.</title>
        <authorList>
            <person name="Dujon B."/>
            <person name="Sherman D."/>
            <person name="Fischer G."/>
            <person name="Durrens P."/>
            <person name="Casaregola S."/>
            <person name="Lafontaine I."/>
            <person name="de Montigny J."/>
            <person name="Marck C."/>
            <person name="Neuveglise C."/>
            <person name="Talla E."/>
            <person name="Goffard N."/>
            <person name="Frangeul L."/>
            <person name="Aigle M."/>
            <person name="Anthouard V."/>
            <person name="Babour A."/>
            <person name="Barbe V."/>
            <person name="Barnay S."/>
            <person name="Blanchin S."/>
            <person name="Beckerich J.-M."/>
            <person name="Beyne E."/>
            <person name="Bleykasten C."/>
            <person name="Boisrame A."/>
            <person name="Boyer J."/>
            <person name="Cattolico L."/>
            <person name="Confanioleri F."/>
            <person name="de Daruvar A."/>
            <person name="Despons L."/>
            <person name="Fabre E."/>
            <person name="Fairhead C."/>
            <person name="Ferry-Dumazet H."/>
            <person name="Groppi A."/>
            <person name="Hantraye F."/>
            <person name="Hennequin C."/>
            <person name="Jauniaux N."/>
            <person name="Joyet P."/>
            <person name="Kachouri R."/>
            <person name="Kerrest A."/>
            <person name="Koszul R."/>
            <person name="Lemaire M."/>
            <person name="Lesur I."/>
            <person name="Ma L."/>
            <person name="Muller H."/>
            <person name="Nicaud J.-M."/>
            <person name="Nikolski M."/>
            <person name="Oztas S."/>
            <person name="Ozier-Kalogeropoulos O."/>
            <person name="Pellenz S."/>
            <person name="Potier S."/>
            <person name="Richard G.-F."/>
            <person name="Straub M.-L."/>
            <person name="Suleau A."/>
            <person name="Swennen D."/>
            <person name="Tekaia F."/>
            <person name="Wesolowski-Louvel M."/>
            <person name="Westhof E."/>
            <person name="Wirth B."/>
            <person name="Zeniou-Meyer M."/>
            <person name="Zivanovic Y."/>
            <person name="Bolotin-Fukuhara M."/>
            <person name="Thierry A."/>
            <person name="Bouchier C."/>
            <person name="Caudron B."/>
            <person name="Scarpelli C."/>
            <person name="Gaillardin C."/>
            <person name="Weissenbach J."/>
            <person name="Wincker P."/>
            <person name="Souciet J.-L."/>
        </authorList>
    </citation>
    <scope>NUCLEOTIDE SEQUENCE [LARGE SCALE GENOMIC DNA]</scope>
    <source>
        <strain>ATCC 2001 / BCRC 20586 / JCM 3761 / NBRC 0622 / NRRL Y-65 / CBS 138</strain>
    </source>
</reference>
<gene>
    <name type="primary">CWC24</name>
    <name type="ordered locus">CAGL0A00935g</name>
</gene>
<name>CWC24_CANGA</name>
<sequence length="226" mass="25559">MFKKRSAASKTRKRVKVETPVQKPAVQKPAVAVKPVLDKSHVAKLEEEIASRPELDQKAVGEADATAVRLKRLKEQATKHDRLNSEPVASSKKIQQAANLRNTILTDFQPDVCKDFKQTGYCGYGDSCKFLHSRDDFKAGWTLATDWKIDEQKEETRKEAVPFKCVLCKESYERPVKTNCGHYFCQKCFVNRIKIDKSCFICGENTEGIAKMATDLVPMDNANKDK</sequence>
<proteinExistence type="inferred from homology"/>